<name>NAP1A_ARATH</name>
<comment type="function">
    <text evidence="1 5 11">May modulate chromatin structure by regulation of nucleosome assembly/disassembly (By similarity). Contributes to the regulation of cell proliferation and cell expansion. May function in nucleotide excision repair (NER). Involved in somatic homologous recombination.</text>
</comment>
<comment type="subunit">
    <text evidence="7 9">Can form homomeric and heteromeric protein complexes with NAP1;2, NAP1;3 and NAP1;4. Binds histone H2A. Interacts with PP438/PNM1.</text>
</comment>
<comment type="interaction">
    <interactant intactId="EBI-4424361">
        <id>Q9SZI2</id>
    </interactant>
    <interactant intactId="EBI-25520907">
        <id>A0A178WA11</id>
        <label>At1g08580</label>
    </interactant>
    <organismsDiffer>false</organismsDiffer>
    <experiments>3</experiments>
</comment>
<comment type="interaction">
    <interactant intactId="EBI-4424361">
        <id>Q9SZI2</id>
    </interactant>
    <interactant intactId="EBI-25520770">
        <id>A0A178WNP1</id>
        <label>At1g30880</label>
    </interactant>
    <organismsDiffer>false</organismsDiffer>
    <experiments>3</experiments>
</comment>
<comment type="interaction">
    <interactant intactId="EBI-4424361">
        <id>Q9SZI2</id>
    </interactant>
    <interactant intactId="EBI-4434374">
        <id>Q9C8Z9</id>
        <label>BHLH148</label>
    </interactant>
    <organismsDiffer>false</organismsDiffer>
    <experiments>3</experiments>
</comment>
<comment type="interaction">
    <interactant intactId="EBI-4424361">
        <id>Q9SZI2</id>
    </interactant>
    <interactant intactId="EBI-4433589">
        <id>Q9SKX1</id>
        <label>IBH1</label>
    </interactant>
    <organismsDiffer>false</organismsDiffer>
    <experiments>4</experiments>
</comment>
<comment type="interaction">
    <interactant intactId="EBI-4424361">
        <id>Q9SZI2</id>
    </interactant>
    <interactant intactId="EBI-4426271">
        <id>Q9FW03</id>
        <label>MES11</label>
    </interactant>
    <organismsDiffer>false</organismsDiffer>
    <experiments>3</experiments>
</comment>
<comment type="interaction">
    <interactant intactId="EBI-4424361">
        <id>Q9SZI2</id>
    </interactant>
    <interactant intactId="EBI-1789562">
        <id>Q9SGU3</id>
        <label>MYB72</label>
    </interactant>
    <organismsDiffer>false</organismsDiffer>
    <experiments>3</experiments>
</comment>
<comment type="interaction">
    <interactant intactId="EBI-4424361">
        <id>Q9SZI2</id>
    </interactant>
    <interactant intactId="EBI-4424361">
        <id>Q9SZI2</id>
        <label>NAP1;1</label>
    </interactant>
    <organismsDiffer>false</organismsDiffer>
    <experiments>5</experiments>
</comment>
<comment type="interaction">
    <interactant intactId="EBI-4424361">
        <id>Q9SZI2</id>
    </interactant>
    <interactant intactId="EBI-1997989">
        <id>Q9ZUP3</id>
        <label>NAP1;2</label>
    </interactant>
    <organismsDiffer>false</organismsDiffer>
    <experiments>4</experiments>
</comment>
<comment type="interaction">
    <interactant intactId="EBI-4424361">
        <id>Q9SZI2</id>
    </interactant>
    <interactant intactId="EBI-4430887">
        <id>Q94K07</id>
        <label>NAP1;3</label>
    </interactant>
    <organismsDiffer>false</organismsDiffer>
    <experiments>4</experiments>
</comment>
<comment type="interaction">
    <interactant intactId="EBI-4424361">
        <id>Q9SZI2</id>
    </interactant>
    <interactant intactId="EBI-6913300">
        <id>F4JEI8</id>
        <label>NAP1;4</label>
    </interactant>
    <organismsDiffer>false</organismsDiffer>
    <experiments>2</experiments>
</comment>
<comment type="interaction">
    <interactant intactId="EBI-4424361">
        <id>Q9SZI2</id>
    </interactant>
    <interactant intactId="EBI-6913662">
        <id>Q9FME4</id>
        <label>PNM1</label>
    </interactant>
    <organismsDiffer>false</organismsDiffer>
    <experiments>4</experiments>
</comment>
<comment type="interaction">
    <interactant intactId="EBI-4424361">
        <id>Q9SZI2</id>
    </interactant>
    <interactant intactId="EBI-25520884">
        <id>Q9LER7</id>
        <label>PSRP5</label>
    </interactant>
    <organismsDiffer>false</organismsDiffer>
    <experiments>3</experiments>
</comment>
<comment type="interaction">
    <interactant intactId="EBI-4424361">
        <id>Q9SZI2</id>
    </interactant>
    <interactant intactId="EBI-4470631">
        <id>Q8VZ55</id>
        <label>RPL35</label>
    </interactant>
    <organismsDiffer>false</organismsDiffer>
    <experiments>4</experiments>
</comment>
<comment type="interaction">
    <interactant intactId="EBI-4424361">
        <id>Q9SZI2</id>
    </interactant>
    <interactant intactId="EBI-9161146">
        <id>Q9LZH9</id>
        <label>RPL7AB</label>
    </interactant>
    <organismsDiffer>false</organismsDiffer>
    <experiments>3</experiments>
</comment>
<comment type="interaction">
    <interactant intactId="EBI-4424361">
        <id>Q9SZI2</id>
    </interactant>
    <interactant intactId="EBI-15207592">
        <id>Q93WU8</id>
        <label>WRKY54</label>
    </interactant>
    <organismsDiffer>false</organismsDiffer>
    <experiments>3</experiments>
</comment>
<comment type="subcellular location">
    <subcellularLocation>
        <location>Nucleus</location>
    </subcellularLocation>
    <subcellularLocation>
        <location>Cytoplasm</location>
    </subcellularLocation>
    <text>Predominantly located in cytoplasm. Shuttles between cytoplasm and nucleus depending on stage of the cell cycle. Farnelysation favors the location to the nucleus early in leaf development.</text>
</comment>
<comment type="alternative products">
    <event type="alternative splicing"/>
    <isoform>
        <id>Q9SZI2-1</id>
        <name>1</name>
        <sequence type="displayed"/>
    </isoform>
    <text>A number of isoforms are produced. According to EST sequences.</text>
</comment>
<comment type="tissue specificity">
    <text evidence="6">Ubiquitous.</text>
</comment>
<comment type="induction">
    <text evidence="10">By brassinosteroids.</text>
</comment>
<comment type="domain">
    <text>The acidic domain is probably involved in the interaction with histones.</text>
</comment>
<comment type="PTM">
    <text evidence="5">Prenylation of the protein is required for its function during the cell proliferation phase of leaf development.</text>
</comment>
<comment type="disruption phenotype">
    <text evidence="5 7 8 11">No visible phenotype (PubMed:19228338). Enlarged plants early in the development but reduced plants in size in a later stage (PubMed:17041028).</text>
</comment>
<comment type="miscellaneous">
    <text evidence="14 15 16">Triple mutant nap1;1-nap1;2-nap1;3 has no obvious visible phenotype but exhibits hypersensitivity to DNA damage after UV-radiation, affected transcription of NER related genes (PubMed:19228338), slight hypersensitive response to abscisic acid (ABA) in seedling growth (PubMed:19825649) and impaired somatic homologous recombination (PubMed:22534127).</text>
</comment>
<comment type="similarity">
    <text evidence="12">Belongs to the nucleosome assembly protein (NAP) family.</text>
</comment>
<comment type="sequence caution" evidence="12">
    <conflict type="erroneous initiation">
        <sequence resource="EMBL-CDS" id="AAA50234"/>
    </conflict>
    <text>Extended N-terminus.</text>
</comment>
<reference key="1">
    <citation type="journal article" date="1994" name="Cell">
        <title>The A. thaliana disease resistance gene RPS2 encodes a protein containing a nucleotide-binding site and leucine-rich repeats.</title>
        <authorList>
            <person name="Mindrinos M."/>
            <person name="Katagiri F."/>
            <person name="Yu G.-L."/>
            <person name="Ausubel F.M."/>
        </authorList>
    </citation>
    <scope>NUCLEOTIDE SEQUENCE [MRNA]</scope>
    <source>
        <strain>cv. Columbia</strain>
        <tissue>Leaf</tissue>
    </source>
</reference>
<reference key="2">
    <citation type="journal article" date="1999" name="Nature">
        <title>Sequence and analysis of chromosome 4 of the plant Arabidopsis thaliana.</title>
        <authorList>
            <person name="Mayer K.F.X."/>
            <person name="Schueller C."/>
            <person name="Wambutt R."/>
            <person name="Murphy G."/>
            <person name="Volckaert G."/>
            <person name="Pohl T."/>
            <person name="Duesterhoeft A."/>
            <person name="Stiekema W."/>
            <person name="Entian K.-D."/>
            <person name="Terryn N."/>
            <person name="Harris B."/>
            <person name="Ansorge W."/>
            <person name="Brandt P."/>
            <person name="Grivell L.A."/>
            <person name="Rieger M."/>
            <person name="Weichselgartner M."/>
            <person name="de Simone V."/>
            <person name="Obermaier B."/>
            <person name="Mache R."/>
            <person name="Mueller M."/>
            <person name="Kreis M."/>
            <person name="Delseny M."/>
            <person name="Puigdomenech P."/>
            <person name="Watson M."/>
            <person name="Schmidtheini T."/>
            <person name="Reichert B."/>
            <person name="Portetelle D."/>
            <person name="Perez-Alonso M."/>
            <person name="Boutry M."/>
            <person name="Bancroft I."/>
            <person name="Vos P."/>
            <person name="Hoheisel J."/>
            <person name="Zimmermann W."/>
            <person name="Wedler H."/>
            <person name="Ridley P."/>
            <person name="Langham S.-A."/>
            <person name="McCullagh B."/>
            <person name="Bilham L."/>
            <person name="Robben J."/>
            <person name="van der Schueren J."/>
            <person name="Grymonprez B."/>
            <person name="Chuang Y.-J."/>
            <person name="Vandenbussche F."/>
            <person name="Braeken M."/>
            <person name="Weltjens I."/>
            <person name="Voet M."/>
            <person name="Bastiaens I."/>
            <person name="Aert R."/>
            <person name="Defoor E."/>
            <person name="Weitzenegger T."/>
            <person name="Bothe G."/>
            <person name="Ramsperger U."/>
            <person name="Hilbert H."/>
            <person name="Braun M."/>
            <person name="Holzer E."/>
            <person name="Brandt A."/>
            <person name="Peters S."/>
            <person name="van Staveren M."/>
            <person name="Dirkse W."/>
            <person name="Mooijman P."/>
            <person name="Klein Lankhorst R."/>
            <person name="Rose M."/>
            <person name="Hauf J."/>
            <person name="Koetter P."/>
            <person name="Berneiser S."/>
            <person name="Hempel S."/>
            <person name="Feldpausch M."/>
            <person name="Lamberth S."/>
            <person name="Van den Daele H."/>
            <person name="De Keyser A."/>
            <person name="Buysshaert C."/>
            <person name="Gielen J."/>
            <person name="Villarroel R."/>
            <person name="De Clercq R."/>
            <person name="van Montagu M."/>
            <person name="Rogers J."/>
            <person name="Cronin A."/>
            <person name="Quail M.A."/>
            <person name="Bray-Allen S."/>
            <person name="Clark L."/>
            <person name="Doggett J."/>
            <person name="Hall S."/>
            <person name="Kay M."/>
            <person name="Lennard N."/>
            <person name="McLay K."/>
            <person name="Mayes R."/>
            <person name="Pettett A."/>
            <person name="Rajandream M.A."/>
            <person name="Lyne M."/>
            <person name="Benes V."/>
            <person name="Rechmann S."/>
            <person name="Borkova D."/>
            <person name="Bloecker H."/>
            <person name="Scharfe M."/>
            <person name="Grimm M."/>
            <person name="Loehnert T.-H."/>
            <person name="Dose S."/>
            <person name="de Haan M."/>
            <person name="Maarse A.C."/>
            <person name="Schaefer M."/>
            <person name="Mueller-Auer S."/>
            <person name="Gabel C."/>
            <person name="Fuchs M."/>
            <person name="Fartmann B."/>
            <person name="Granderath K."/>
            <person name="Dauner D."/>
            <person name="Herzl A."/>
            <person name="Neumann S."/>
            <person name="Argiriou A."/>
            <person name="Vitale D."/>
            <person name="Liguori R."/>
            <person name="Piravandi E."/>
            <person name="Massenet O."/>
            <person name="Quigley F."/>
            <person name="Clabauld G."/>
            <person name="Muendlein A."/>
            <person name="Felber R."/>
            <person name="Schnabl S."/>
            <person name="Hiller R."/>
            <person name="Schmidt W."/>
            <person name="Lecharny A."/>
            <person name="Aubourg S."/>
            <person name="Chefdor F."/>
            <person name="Cooke R."/>
            <person name="Berger C."/>
            <person name="Monfort A."/>
            <person name="Casacuberta E."/>
            <person name="Gibbons T."/>
            <person name="Weber N."/>
            <person name="Vandenbol M."/>
            <person name="Bargues M."/>
            <person name="Terol J."/>
            <person name="Torres A."/>
            <person name="Perez-Perez A."/>
            <person name="Purnelle B."/>
            <person name="Bent E."/>
            <person name="Johnson S."/>
            <person name="Tacon D."/>
            <person name="Jesse T."/>
            <person name="Heijnen L."/>
            <person name="Schwarz S."/>
            <person name="Scholler P."/>
            <person name="Heber S."/>
            <person name="Francs P."/>
            <person name="Bielke C."/>
            <person name="Frishman D."/>
            <person name="Haase D."/>
            <person name="Lemcke K."/>
            <person name="Mewes H.-W."/>
            <person name="Stocker S."/>
            <person name="Zaccaria P."/>
            <person name="Bevan M."/>
            <person name="Wilson R.K."/>
            <person name="de la Bastide M."/>
            <person name="Habermann K."/>
            <person name="Parnell L."/>
            <person name="Dedhia N."/>
            <person name="Gnoj L."/>
            <person name="Schutz K."/>
            <person name="Huang E."/>
            <person name="Spiegel L."/>
            <person name="Sekhon M."/>
            <person name="Murray J."/>
            <person name="Sheet P."/>
            <person name="Cordes M."/>
            <person name="Abu-Threideh J."/>
            <person name="Stoneking T."/>
            <person name="Kalicki J."/>
            <person name="Graves T."/>
            <person name="Harmon G."/>
            <person name="Edwards J."/>
            <person name="Latreille P."/>
            <person name="Courtney L."/>
            <person name="Cloud J."/>
            <person name="Abbott A."/>
            <person name="Scott K."/>
            <person name="Johnson D."/>
            <person name="Minx P."/>
            <person name="Bentley D."/>
            <person name="Fulton B."/>
            <person name="Miller N."/>
            <person name="Greco T."/>
            <person name="Kemp K."/>
            <person name="Kramer J."/>
            <person name="Fulton L."/>
            <person name="Mardis E."/>
            <person name="Dante M."/>
            <person name="Pepin K."/>
            <person name="Hillier L.W."/>
            <person name="Nelson J."/>
            <person name="Spieth J."/>
            <person name="Ryan E."/>
            <person name="Andrews S."/>
            <person name="Geisel C."/>
            <person name="Layman D."/>
            <person name="Du H."/>
            <person name="Ali J."/>
            <person name="Berghoff A."/>
            <person name="Jones K."/>
            <person name="Drone K."/>
            <person name="Cotton M."/>
            <person name="Joshu C."/>
            <person name="Antonoiu B."/>
            <person name="Zidanic M."/>
            <person name="Strong C."/>
            <person name="Sun H."/>
            <person name="Lamar B."/>
            <person name="Yordan C."/>
            <person name="Ma P."/>
            <person name="Zhong J."/>
            <person name="Preston R."/>
            <person name="Vil D."/>
            <person name="Shekher M."/>
            <person name="Matero A."/>
            <person name="Shah R."/>
            <person name="Swaby I.K."/>
            <person name="O'Shaughnessy A."/>
            <person name="Rodriguez M."/>
            <person name="Hoffman J."/>
            <person name="Till S."/>
            <person name="Granat S."/>
            <person name="Shohdy N."/>
            <person name="Hasegawa A."/>
            <person name="Hameed A."/>
            <person name="Lodhi M."/>
            <person name="Johnson A."/>
            <person name="Chen E."/>
            <person name="Marra M.A."/>
            <person name="Martienssen R."/>
            <person name="McCombie W.R."/>
        </authorList>
    </citation>
    <scope>NUCLEOTIDE SEQUENCE [LARGE SCALE GENOMIC DNA]</scope>
    <source>
        <strain>cv. Columbia</strain>
    </source>
</reference>
<reference key="3">
    <citation type="journal article" date="2017" name="Plant J.">
        <title>Araport11: a complete reannotation of the Arabidopsis thaliana reference genome.</title>
        <authorList>
            <person name="Cheng C.Y."/>
            <person name="Krishnakumar V."/>
            <person name="Chan A.P."/>
            <person name="Thibaud-Nissen F."/>
            <person name="Schobel S."/>
            <person name="Town C.D."/>
        </authorList>
    </citation>
    <scope>GENOME REANNOTATION</scope>
    <source>
        <strain>cv. Columbia</strain>
    </source>
</reference>
<reference key="4">
    <citation type="journal article" date="2003" name="Science">
        <title>Empirical analysis of transcriptional activity in the Arabidopsis genome.</title>
        <authorList>
            <person name="Yamada K."/>
            <person name="Lim J."/>
            <person name="Dale J.M."/>
            <person name="Chen H."/>
            <person name="Shinn P."/>
            <person name="Palm C.J."/>
            <person name="Southwick A.M."/>
            <person name="Wu H.C."/>
            <person name="Kim C.J."/>
            <person name="Nguyen M."/>
            <person name="Pham P.K."/>
            <person name="Cheuk R.F."/>
            <person name="Karlin-Newmann G."/>
            <person name="Liu S.X."/>
            <person name="Lam B."/>
            <person name="Sakano H."/>
            <person name="Wu T."/>
            <person name="Yu G."/>
            <person name="Miranda M."/>
            <person name="Quach H.L."/>
            <person name="Tripp M."/>
            <person name="Chang C.H."/>
            <person name="Lee J.M."/>
            <person name="Toriumi M.J."/>
            <person name="Chan M.M."/>
            <person name="Tang C.C."/>
            <person name="Onodera C.S."/>
            <person name="Deng J.M."/>
            <person name="Akiyama K."/>
            <person name="Ansari Y."/>
            <person name="Arakawa T."/>
            <person name="Banh J."/>
            <person name="Banno F."/>
            <person name="Bowser L."/>
            <person name="Brooks S.Y."/>
            <person name="Carninci P."/>
            <person name="Chao Q."/>
            <person name="Choy N."/>
            <person name="Enju A."/>
            <person name="Goldsmith A.D."/>
            <person name="Gurjal M."/>
            <person name="Hansen N.F."/>
            <person name="Hayashizaki Y."/>
            <person name="Johnson-Hopson C."/>
            <person name="Hsuan V.W."/>
            <person name="Iida K."/>
            <person name="Karnes M."/>
            <person name="Khan S."/>
            <person name="Koesema E."/>
            <person name="Ishida J."/>
            <person name="Jiang P.X."/>
            <person name="Jones T."/>
            <person name="Kawai J."/>
            <person name="Kamiya A."/>
            <person name="Meyers C."/>
            <person name="Nakajima M."/>
            <person name="Narusaka M."/>
            <person name="Seki M."/>
            <person name="Sakurai T."/>
            <person name="Satou M."/>
            <person name="Tamse R."/>
            <person name="Vaysberg M."/>
            <person name="Wallender E.K."/>
            <person name="Wong C."/>
            <person name="Yamamura Y."/>
            <person name="Yuan S."/>
            <person name="Shinozaki K."/>
            <person name="Davis R.W."/>
            <person name="Theologis A."/>
            <person name="Ecker J.R."/>
        </authorList>
    </citation>
    <scope>NUCLEOTIDE SEQUENCE [LARGE SCALE MRNA]</scope>
    <source>
        <strain>cv. Columbia</strain>
    </source>
</reference>
<reference key="5">
    <citation type="journal article" date="2006" name="Plant Cell">
        <title>Arabidopsis NRP1 and NRP2 encode histone chaperones and are required for maintaining postembryonic root growth.</title>
        <authorList>
            <person name="Zhu Y."/>
            <person name="Dong A."/>
            <person name="Meyer D."/>
            <person name="Pichon O."/>
            <person name="Renou J.P."/>
            <person name="Cao K."/>
            <person name="Shen W.H."/>
        </authorList>
    </citation>
    <scope>TISSUE SPECIFICITY</scope>
</reference>
<reference key="6">
    <citation type="journal article" date="2006" name="Plant Physiol.">
        <title>Developmentally controlled farnesylation modulates AtNAP1;1 function in cell proliferation and cell expansion during Arabidopsis leaf development.</title>
        <authorList>
            <person name="Galichet A."/>
            <person name="Gruissem W."/>
        </authorList>
    </citation>
    <scope>ISOPRENYLATION AT CYS-369</scope>
    <scope>METHYLATION AT CYS-369</scope>
    <scope>MUTAGENESIS OF CYS-369</scope>
    <scope>FUNCTION</scope>
    <scope>DISRUPTION PHENOTYPE</scope>
    <scope>SUBCELLULAR LOCATION</scope>
</reference>
<reference key="7">
    <citation type="journal article" date="2009" name="Mol. Plant">
        <title>A truncated Arabidopsis NUCLEOSOME ASSEMBLY PROTEIN 1, AtNAP1;3T, alters plant growth responses to abscisic acid and salt in the Atnap1;3-2 mutant.</title>
        <authorList>
            <person name="Liu Z.Q."/>
            <person name="Gao J."/>
            <person name="Dong A.W."/>
            <person name="Shen W.H."/>
        </authorList>
    </citation>
    <scope>DISRUPTION PHENOTYPE</scope>
</reference>
<reference key="8">
    <citation type="journal article" date="2009" name="Plant J.">
        <title>Molecular and reverse genetic characterization of NUCLEOSOME ASSEMBLY PROTEIN1 (NAP1) genes unravels their function in transcription and nucleotide excision repair in Arabidopsis thaliana.</title>
        <authorList>
            <person name="Liu Z."/>
            <person name="Zhu Y."/>
            <person name="Gao J."/>
            <person name="Yu F."/>
            <person name="Dong A."/>
            <person name="Shen W.H."/>
        </authorList>
    </citation>
    <scope>GENE FAMILY</scope>
    <scope>SUBUNIT</scope>
    <scope>SUBCELLULAR LOCATION</scope>
    <scope>DISRUPTION PHENOTYPE</scope>
    <scope>INTERACTION WITH HISTONE H2A</scope>
</reference>
<reference key="9">
    <citation type="journal article" date="2011" name="Plant Cell">
        <title>An Arabidopsis dual-localized pentatricopeptide repeat protein interacts with nuclear proteins involved in gene expression regulation.</title>
        <authorList>
            <person name="Hammani K."/>
            <person name="Gobert A."/>
            <person name="Hleibieh K."/>
            <person name="Choulier L."/>
            <person name="Small I."/>
            <person name="Giege P."/>
        </authorList>
    </citation>
    <scope>INTERACTION WITH PP438/PNM1</scope>
</reference>
<reference key="10">
    <citation type="journal article" date="2011" name="Plant Physiol. Biochem.">
        <title>Characterization of brassinosteroid-regulated proteins in a nuclear-enriched fraction of Arabidopsis suspension-cultured cells.</title>
        <authorList>
            <person name="Shigeta T."/>
            <person name="Yasuda D."/>
            <person name="Mori T."/>
            <person name="Yoshimitsu Y."/>
            <person name="Nakamura Y."/>
            <person name="Yoshida S."/>
            <person name="Asami T."/>
            <person name="Okamoto S."/>
            <person name="Matsuo T."/>
        </authorList>
    </citation>
    <scope>INDUCTION</scope>
    <scope>IDENTIFICATION BY MASS SPECTROMETRY</scope>
</reference>
<reference key="11">
    <citation type="journal article" date="2012" name="Plant Cell">
        <title>NAP1 family histone chaperones are required for somatic homologous recombination in Arabidopsis.</title>
        <authorList>
            <person name="Gao J."/>
            <person name="Zhu Y."/>
            <person name="Zhou W."/>
            <person name="Molinier J."/>
            <person name="Dong A."/>
            <person name="Shen W.H."/>
        </authorList>
    </citation>
    <scope>DISRUPTION PHENOTYPE</scope>
    <scope>FUNCTION</scope>
</reference>
<keyword id="KW-0025">Alternative splicing</keyword>
<keyword id="KW-0143">Chaperone</keyword>
<keyword id="KW-0175">Coiled coil</keyword>
<keyword id="KW-0963">Cytoplasm</keyword>
<keyword id="KW-0449">Lipoprotein</keyword>
<keyword id="KW-0488">Methylation</keyword>
<keyword id="KW-0539">Nucleus</keyword>
<keyword id="KW-0597">Phosphoprotein</keyword>
<keyword id="KW-0636">Prenylation</keyword>
<keyword id="KW-1185">Reference proteome</keyword>
<dbReference type="EMBL" id="U12858">
    <property type="protein sequence ID" value="AAA50234.1"/>
    <property type="status" value="ALT_INIT"/>
    <property type="molecule type" value="mRNA"/>
</dbReference>
<dbReference type="EMBL" id="AL049483">
    <property type="protein sequence ID" value="CAB39676.1"/>
    <property type="molecule type" value="Genomic_DNA"/>
</dbReference>
<dbReference type="EMBL" id="AL161564">
    <property type="protein sequence ID" value="CAB79466.1"/>
    <property type="molecule type" value="Genomic_DNA"/>
</dbReference>
<dbReference type="EMBL" id="CP002687">
    <property type="protein sequence ID" value="AEE85158.1"/>
    <property type="molecule type" value="Genomic_DNA"/>
</dbReference>
<dbReference type="EMBL" id="AY054484">
    <property type="protein sequence ID" value="AAK96675.1"/>
    <property type="molecule type" value="mRNA"/>
</dbReference>
<dbReference type="EMBL" id="AY093283">
    <property type="protein sequence ID" value="AAM13282.1"/>
    <property type="molecule type" value="mRNA"/>
</dbReference>
<dbReference type="PIR" id="T04266">
    <property type="entry name" value="T04266"/>
</dbReference>
<dbReference type="RefSeq" id="NP_194341.1">
    <molecule id="Q9SZI2-1"/>
    <property type="nucleotide sequence ID" value="NM_118744.3"/>
</dbReference>
<dbReference type="SMR" id="Q9SZI2"/>
<dbReference type="BioGRID" id="14004">
    <property type="interactions" value="38"/>
</dbReference>
<dbReference type="FunCoup" id="Q9SZI2">
    <property type="interactions" value="3686"/>
</dbReference>
<dbReference type="IntAct" id="Q9SZI2">
    <property type="interactions" value="22"/>
</dbReference>
<dbReference type="STRING" id="3702.Q9SZI2"/>
<dbReference type="iPTMnet" id="Q9SZI2"/>
<dbReference type="PaxDb" id="3702-AT4G26110.1"/>
<dbReference type="EnsemblPlants" id="AT4G26110.1">
    <molecule id="Q9SZI2-1"/>
    <property type="protein sequence ID" value="AT4G26110.1"/>
    <property type="gene ID" value="AT4G26110"/>
</dbReference>
<dbReference type="GeneID" id="828717"/>
<dbReference type="Gramene" id="AT4G26110.1">
    <molecule id="Q9SZI2-1"/>
    <property type="protein sequence ID" value="AT4G26110.1"/>
    <property type="gene ID" value="AT4G26110"/>
</dbReference>
<dbReference type="KEGG" id="ath:AT4G26110"/>
<dbReference type="Araport" id="AT4G26110"/>
<dbReference type="TAIR" id="AT4G26110">
    <property type="gene designation" value="NAP1"/>
</dbReference>
<dbReference type="eggNOG" id="KOG1507">
    <property type="taxonomic scope" value="Eukaryota"/>
</dbReference>
<dbReference type="HOGENOM" id="CLU_038841_4_1_1"/>
<dbReference type="InParanoid" id="Q9SZI2"/>
<dbReference type="PhylomeDB" id="Q9SZI2"/>
<dbReference type="CD-CODE" id="4299E36E">
    <property type="entry name" value="Nucleolus"/>
</dbReference>
<dbReference type="PRO" id="PR:Q9SZI2"/>
<dbReference type="Proteomes" id="UP000006548">
    <property type="component" value="Chromosome 4"/>
</dbReference>
<dbReference type="ExpressionAtlas" id="Q9SZI2">
    <property type="expression patterns" value="baseline and differential"/>
</dbReference>
<dbReference type="GO" id="GO:0005737">
    <property type="term" value="C:cytoplasm"/>
    <property type="evidence" value="ECO:0000314"/>
    <property type="project" value="UniProtKB"/>
</dbReference>
<dbReference type="GO" id="GO:0005829">
    <property type="term" value="C:cytosol"/>
    <property type="evidence" value="ECO:0007005"/>
    <property type="project" value="TAIR"/>
</dbReference>
<dbReference type="GO" id="GO:0005634">
    <property type="term" value="C:nucleus"/>
    <property type="evidence" value="ECO:0000314"/>
    <property type="project" value="UniProtKB"/>
</dbReference>
<dbReference type="GO" id="GO:0042393">
    <property type="term" value="F:histone binding"/>
    <property type="evidence" value="ECO:0000314"/>
    <property type="project" value="UniProtKB"/>
</dbReference>
<dbReference type="GO" id="GO:0042802">
    <property type="term" value="F:identical protein binding"/>
    <property type="evidence" value="ECO:0000353"/>
    <property type="project" value="IntAct"/>
</dbReference>
<dbReference type="GO" id="GO:0030154">
    <property type="term" value="P:cell differentiation"/>
    <property type="evidence" value="ECO:0000315"/>
    <property type="project" value="UniProtKB"/>
</dbReference>
<dbReference type="GO" id="GO:0008283">
    <property type="term" value="P:cell population proliferation"/>
    <property type="evidence" value="ECO:0000315"/>
    <property type="project" value="UniProtKB"/>
</dbReference>
<dbReference type="GO" id="GO:0006281">
    <property type="term" value="P:DNA repair"/>
    <property type="evidence" value="ECO:0000316"/>
    <property type="project" value="TAIR"/>
</dbReference>
<dbReference type="GO" id="GO:0000724">
    <property type="term" value="P:double-strand break repair via homologous recombination"/>
    <property type="evidence" value="ECO:0000316"/>
    <property type="project" value="TAIR"/>
</dbReference>
<dbReference type="GO" id="GO:0006334">
    <property type="term" value="P:nucleosome assembly"/>
    <property type="evidence" value="ECO:0007669"/>
    <property type="project" value="InterPro"/>
</dbReference>
<dbReference type="GO" id="GO:0016444">
    <property type="term" value="P:somatic cell DNA recombination"/>
    <property type="evidence" value="ECO:0000315"/>
    <property type="project" value="UniProtKB"/>
</dbReference>
<dbReference type="FunFam" id="1.20.5.1500:FF:000001">
    <property type="entry name" value="Nucleosome assembly protein 1-like 1"/>
    <property type="match status" value="1"/>
</dbReference>
<dbReference type="FunFam" id="3.30.1120.90:FF:000005">
    <property type="entry name" value="Nucleosome assembly protein11"/>
    <property type="match status" value="1"/>
</dbReference>
<dbReference type="Gene3D" id="1.20.5.1500">
    <property type="match status" value="1"/>
</dbReference>
<dbReference type="Gene3D" id="3.30.1120.90">
    <property type="entry name" value="Nucleosome assembly protein"/>
    <property type="match status" value="1"/>
</dbReference>
<dbReference type="InterPro" id="IPR037231">
    <property type="entry name" value="NAP-like_sf"/>
</dbReference>
<dbReference type="InterPro" id="IPR002164">
    <property type="entry name" value="NAP_family"/>
</dbReference>
<dbReference type="PANTHER" id="PTHR11875">
    <property type="entry name" value="TESTIS-SPECIFIC Y-ENCODED PROTEIN"/>
    <property type="match status" value="1"/>
</dbReference>
<dbReference type="Pfam" id="PF00956">
    <property type="entry name" value="NAP"/>
    <property type="match status" value="1"/>
</dbReference>
<dbReference type="SUPFAM" id="SSF143113">
    <property type="entry name" value="NAP-like"/>
    <property type="match status" value="1"/>
</dbReference>
<organism>
    <name type="scientific">Arabidopsis thaliana</name>
    <name type="common">Mouse-ear cress</name>
    <dbReference type="NCBI Taxonomy" id="3702"/>
    <lineage>
        <taxon>Eukaryota</taxon>
        <taxon>Viridiplantae</taxon>
        <taxon>Streptophyta</taxon>
        <taxon>Embryophyta</taxon>
        <taxon>Tracheophyta</taxon>
        <taxon>Spermatophyta</taxon>
        <taxon>Magnoliopsida</taxon>
        <taxon>eudicotyledons</taxon>
        <taxon>Gunneridae</taxon>
        <taxon>Pentapetalae</taxon>
        <taxon>rosids</taxon>
        <taxon>malvids</taxon>
        <taxon>Brassicales</taxon>
        <taxon>Brassicaceae</taxon>
        <taxon>Camelineae</taxon>
        <taxon>Arabidopsis</taxon>
    </lineage>
</organism>
<gene>
    <name type="primary">NAP1;1</name>
    <name type="synonym">NFA1</name>
    <name type="ordered locus">At4g26110</name>
    <name type="ORF">F20B18.220</name>
</gene>
<sequence length="372" mass="42997">MSNDKDSFNVSDLTAALKDEDRAGLVNALKNKLQNLAGQRSDVLENLTPNVRKRVDALRDIQSQHDELEAKFREERAILEAKYQTLYQPLYVKRYEIVNGTTEVELAPEDDTKVDQGEEKTAEEKGVPSFWLTALKNNDVISEEVTERDEGALKYLKDIKWCKIEEPKGFKLEFFFDTNPYFKNTVLTKSYHMIDEDEPLLEKAMGTEIDWYPGKCLTQKILKKKPKKGSKNTKPITKLEDCESFFNFFSPPEVPDEDEDIDEERAEDLQNLMEQDYDIGSTIREKIIPRAVSWFTGEAMEAEDFEIDDDEEDDIDEDEDEEDEEDEEDDDDEDEEESKTKKKPSIGNKKGGRSQIVGEGKQDERPPECKQQ</sequence>
<proteinExistence type="evidence at protein level"/>
<accession>Q9SZI2</accession>
<accession>Q38809</accession>
<protein>
    <recommendedName>
        <fullName>Nucleosome assembly protein 1;1</fullName>
        <shortName>AtNAP1;1</shortName>
    </recommendedName>
    <alternativeName>
        <fullName>Nucleosome/chromatin assembly factor group A1</fullName>
    </alternativeName>
</protein>
<feature type="chain" id="PRO_0000423676" description="Nucleosome assembly protein 1;1" evidence="13">
    <location>
        <begin position="1"/>
        <end position="369"/>
    </location>
</feature>
<feature type="propeptide" id="PRO_0000423677" description="Removed in mature form" evidence="13">
    <location>
        <begin position="370"/>
        <end position="372"/>
    </location>
</feature>
<feature type="region of interest" description="Disordered" evidence="4">
    <location>
        <begin position="299"/>
        <end position="372"/>
    </location>
</feature>
<feature type="coiled-coil region" evidence="3">
    <location>
        <begin position="26"/>
        <end position="80"/>
    </location>
</feature>
<feature type="short sequence motif" description="Nuclear export signal" evidence="3">
    <location>
        <begin position="47"/>
        <end position="62"/>
    </location>
</feature>
<feature type="short sequence motif" description="Nuclear localization signal" evidence="3">
    <location>
        <begin position="223"/>
        <end position="228"/>
    </location>
</feature>
<feature type="compositionally biased region" description="Acidic residues" evidence="4">
    <location>
        <begin position="300"/>
        <end position="337"/>
    </location>
</feature>
<feature type="compositionally biased region" description="Basic and acidic residues" evidence="4">
    <location>
        <begin position="360"/>
        <end position="372"/>
    </location>
</feature>
<feature type="modified residue" description="Phosphoserine" evidence="2">
    <location>
        <position position="41"/>
    </location>
</feature>
<feature type="modified residue" description="Cysteine methyl ester" evidence="13">
    <location>
        <position position="369"/>
    </location>
</feature>
<feature type="lipid moiety-binding region" description="S-farnesyl cysteine" evidence="5">
    <location>
        <position position="369"/>
    </location>
</feature>
<feature type="mutagenesis site" description="Abolishes farnesylation and disrupts the function of the protein." evidence="5">
    <original>C</original>
    <variation>S</variation>
    <location>
        <position position="369"/>
    </location>
</feature>
<evidence type="ECO:0000250" key="1"/>
<evidence type="ECO:0000250" key="2">
    <source>
        <dbReference type="UniProtKB" id="Q9ZUP3"/>
    </source>
</evidence>
<evidence type="ECO:0000255" key="3"/>
<evidence type="ECO:0000256" key="4">
    <source>
        <dbReference type="SAM" id="MobiDB-lite"/>
    </source>
</evidence>
<evidence type="ECO:0000269" key="5">
    <source>
    </source>
</evidence>
<evidence type="ECO:0000269" key="6">
    <source>
    </source>
</evidence>
<evidence type="ECO:0000269" key="7">
    <source>
    </source>
</evidence>
<evidence type="ECO:0000269" key="8">
    <source>
    </source>
</evidence>
<evidence type="ECO:0000269" key="9">
    <source>
    </source>
</evidence>
<evidence type="ECO:0000269" key="10">
    <source>
    </source>
</evidence>
<evidence type="ECO:0000269" key="11">
    <source>
    </source>
</evidence>
<evidence type="ECO:0000305" key="12"/>
<evidence type="ECO:0000305" key="13">
    <source>
    </source>
</evidence>
<evidence type="ECO:0000305" key="14">
    <source>
    </source>
</evidence>
<evidence type="ECO:0000305" key="15">
    <source>
    </source>
</evidence>
<evidence type="ECO:0000305" key="16">
    <source>
    </source>
</evidence>